<keyword id="KW-0687">Ribonucleoprotein</keyword>
<keyword id="KW-0689">Ribosomal protein</keyword>
<dbReference type="EMBL" id="CP000239">
    <property type="protein sequence ID" value="ABC99484.1"/>
    <property type="molecule type" value="Genomic_DNA"/>
</dbReference>
<dbReference type="RefSeq" id="WP_011430161.1">
    <property type="nucleotide sequence ID" value="NC_007775.1"/>
</dbReference>
<dbReference type="SMR" id="Q2JUX3"/>
<dbReference type="STRING" id="321327.CYA_1303"/>
<dbReference type="KEGG" id="cya:CYA_1303"/>
<dbReference type="eggNOG" id="COG0051">
    <property type="taxonomic scope" value="Bacteria"/>
</dbReference>
<dbReference type="HOGENOM" id="CLU_122625_1_3_3"/>
<dbReference type="OrthoDB" id="9804464at2"/>
<dbReference type="Proteomes" id="UP000008818">
    <property type="component" value="Chromosome"/>
</dbReference>
<dbReference type="GO" id="GO:1990904">
    <property type="term" value="C:ribonucleoprotein complex"/>
    <property type="evidence" value="ECO:0007669"/>
    <property type="project" value="UniProtKB-KW"/>
</dbReference>
<dbReference type="GO" id="GO:0005840">
    <property type="term" value="C:ribosome"/>
    <property type="evidence" value="ECO:0007669"/>
    <property type="project" value="UniProtKB-KW"/>
</dbReference>
<dbReference type="GO" id="GO:0003735">
    <property type="term" value="F:structural constituent of ribosome"/>
    <property type="evidence" value="ECO:0007669"/>
    <property type="project" value="InterPro"/>
</dbReference>
<dbReference type="GO" id="GO:0000049">
    <property type="term" value="F:tRNA binding"/>
    <property type="evidence" value="ECO:0007669"/>
    <property type="project" value="UniProtKB-UniRule"/>
</dbReference>
<dbReference type="GO" id="GO:0006412">
    <property type="term" value="P:translation"/>
    <property type="evidence" value="ECO:0007669"/>
    <property type="project" value="UniProtKB-UniRule"/>
</dbReference>
<dbReference type="FunFam" id="3.30.70.600:FF:000001">
    <property type="entry name" value="30S ribosomal protein S10"/>
    <property type="match status" value="1"/>
</dbReference>
<dbReference type="Gene3D" id="3.30.70.600">
    <property type="entry name" value="Ribosomal protein S10 domain"/>
    <property type="match status" value="1"/>
</dbReference>
<dbReference type="HAMAP" id="MF_00508">
    <property type="entry name" value="Ribosomal_uS10"/>
    <property type="match status" value="1"/>
</dbReference>
<dbReference type="InterPro" id="IPR001848">
    <property type="entry name" value="Ribosomal_uS10"/>
</dbReference>
<dbReference type="InterPro" id="IPR027486">
    <property type="entry name" value="Ribosomal_uS10_dom"/>
</dbReference>
<dbReference type="InterPro" id="IPR036838">
    <property type="entry name" value="Ribosomal_uS10_dom_sf"/>
</dbReference>
<dbReference type="NCBIfam" id="NF001861">
    <property type="entry name" value="PRK00596.1"/>
    <property type="match status" value="1"/>
</dbReference>
<dbReference type="NCBIfam" id="TIGR01049">
    <property type="entry name" value="rpsJ_bact"/>
    <property type="match status" value="1"/>
</dbReference>
<dbReference type="PANTHER" id="PTHR11700">
    <property type="entry name" value="30S RIBOSOMAL PROTEIN S10 FAMILY MEMBER"/>
    <property type="match status" value="1"/>
</dbReference>
<dbReference type="Pfam" id="PF00338">
    <property type="entry name" value="Ribosomal_S10"/>
    <property type="match status" value="1"/>
</dbReference>
<dbReference type="PRINTS" id="PR00971">
    <property type="entry name" value="RIBOSOMALS10"/>
</dbReference>
<dbReference type="SMART" id="SM01403">
    <property type="entry name" value="Ribosomal_S10"/>
    <property type="match status" value="1"/>
</dbReference>
<dbReference type="SUPFAM" id="SSF54999">
    <property type="entry name" value="Ribosomal protein S10"/>
    <property type="match status" value="1"/>
</dbReference>
<proteinExistence type="inferred from homology"/>
<feature type="chain" id="PRO_0000237108" description="Small ribosomal subunit protein uS10">
    <location>
        <begin position="1"/>
        <end position="105"/>
    </location>
</feature>
<protein>
    <recommendedName>
        <fullName evidence="1">Small ribosomal subunit protein uS10</fullName>
    </recommendedName>
    <alternativeName>
        <fullName evidence="2">30S ribosomal protein S10</fullName>
    </alternativeName>
</protein>
<name>RS10_SYNJA</name>
<reference key="1">
    <citation type="journal article" date="2007" name="ISME J.">
        <title>Population level functional diversity in a microbial community revealed by comparative genomic and metagenomic analyses.</title>
        <authorList>
            <person name="Bhaya D."/>
            <person name="Grossman A.R."/>
            <person name="Steunou A.-S."/>
            <person name="Khuri N."/>
            <person name="Cohan F.M."/>
            <person name="Hamamura N."/>
            <person name="Melendrez M.C."/>
            <person name="Bateson M.M."/>
            <person name="Ward D.M."/>
            <person name="Heidelberg J.F."/>
        </authorList>
    </citation>
    <scope>NUCLEOTIDE SEQUENCE [LARGE SCALE GENOMIC DNA]</scope>
    <source>
        <strain>JA-3-3Ab</strain>
    </source>
</reference>
<comment type="function">
    <text evidence="1">Involved in the binding of tRNA to the ribosomes.</text>
</comment>
<comment type="subunit">
    <text evidence="1">Part of the 30S ribosomal subunit.</text>
</comment>
<comment type="similarity">
    <text evidence="1">Belongs to the universal ribosomal protein uS10 family.</text>
</comment>
<sequence length="105" mass="12133">MATLTQQKIRIRLKAYDHRLLDTSCDKIVDTARRTEAVPVGPIPLPTRRRLYCVLRSPHTDKDSREHFEVRTHRRIIDIYSPSSKTIDALMKLDLPAGVDIEVKL</sequence>
<organism>
    <name type="scientific">Synechococcus sp. (strain JA-3-3Ab)</name>
    <name type="common">Cyanobacteria bacterium Yellowstone A-Prime</name>
    <dbReference type="NCBI Taxonomy" id="321327"/>
    <lineage>
        <taxon>Bacteria</taxon>
        <taxon>Bacillati</taxon>
        <taxon>Cyanobacteriota</taxon>
        <taxon>Cyanophyceae</taxon>
        <taxon>Synechococcales</taxon>
        <taxon>Synechococcaceae</taxon>
        <taxon>Synechococcus</taxon>
    </lineage>
</organism>
<evidence type="ECO:0000255" key="1">
    <source>
        <dbReference type="HAMAP-Rule" id="MF_00508"/>
    </source>
</evidence>
<evidence type="ECO:0000305" key="2"/>
<gene>
    <name evidence="1" type="primary">rpsJ</name>
    <name evidence="1" type="synonym">rps10</name>
    <name type="ordered locus">CYA_1303</name>
</gene>
<accession>Q2JUX3</accession>